<protein>
    <recommendedName>
        <fullName evidence="11">Polyprenol-phosphate-mannose--protein mannosyltransferase</fullName>
        <ecNumber evidence="12 13">2.4.1.-</ecNumber>
    </recommendedName>
    <alternativeName>
        <fullName evidence="10">MtPMT</fullName>
    </alternativeName>
    <alternativeName>
        <fullName evidence="9">PMTub</fullName>
    </alternativeName>
    <alternativeName>
        <fullName evidence="8">Protein O-mannosyltransferase</fullName>
        <shortName evidence="8">PMT</shortName>
    </alternativeName>
</protein>
<dbReference type="EC" id="2.4.1.-" evidence="12 13"/>
<dbReference type="EMBL" id="AL123456">
    <property type="protein sequence ID" value="CCP43752.1"/>
    <property type="status" value="ALT_INIT"/>
    <property type="molecule type" value="Genomic_DNA"/>
</dbReference>
<dbReference type="PIR" id="E70602">
    <property type="entry name" value="E70602"/>
</dbReference>
<dbReference type="RefSeq" id="NP_215518.1">
    <property type="nucleotide sequence ID" value="NC_000962.3"/>
</dbReference>
<dbReference type="SMR" id="P9WN05"/>
<dbReference type="STRING" id="83332.Rv1002c"/>
<dbReference type="PaxDb" id="83332-Rv1002c"/>
<dbReference type="DNASU" id="887882"/>
<dbReference type="GeneID" id="887882"/>
<dbReference type="KEGG" id="mtu:Rv1002c"/>
<dbReference type="PATRIC" id="fig|83332.12.peg.1117"/>
<dbReference type="TubercuList" id="Rv1002c"/>
<dbReference type="eggNOG" id="COG4346">
    <property type="taxonomic scope" value="Bacteria"/>
</dbReference>
<dbReference type="InParanoid" id="P9WN05"/>
<dbReference type="OrthoDB" id="9776737at2"/>
<dbReference type="UniPathway" id="UPA00378"/>
<dbReference type="Proteomes" id="UP000001584">
    <property type="component" value="Chromosome"/>
</dbReference>
<dbReference type="GO" id="GO:0005886">
    <property type="term" value="C:plasma membrane"/>
    <property type="evidence" value="ECO:0007669"/>
    <property type="project" value="UniProtKB-SubCell"/>
</dbReference>
<dbReference type="GO" id="GO:0004169">
    <property type="term" value="F:dolichyl-phosphate-mannose-protein mannosyltransferase activity"/>
    <property type="evidence" value="ECO:0007669"/>
    <property type="project" value="UniProtKB-EC"/>
</dbReference>
<dbReference type="GO" id="GO:0035269">
    <property type="term" value="P:protein O-linked mannosylation"/>
    <property type="evidence" value="ECO:0000314"/>
    <property type="project" value="MTBBASE"/>
</dbReference>
<dbReference type="InterPro" id="IPR027005">
    <property type="entry name" value="GlyclTrfase_39-like"/>
</dbReference>
<dbReference type="InterPro" id="IPR003342">
    <property type="entry name" value="Glyco_trans_39/83"/>
</dbReference>
<dbReference type="InterPro" id="IPR032421">
    <property type="entry name" value="PMT_4TMC"/>
</dbReference>
<dbReference type="PANTHER" id="PTHR10050">
    <property type="entry name" value="DOLICHYL-PHOSPHATE-MANNOSE--PROTEIN MANNOSYLTRANSFERASE"/>
    <property type="match status" value="1"/>
</dbReference>
<dbReference type="PANTHER" id="PTHR10050:SF46">
    <property type="entry name" value="PROTEIN O-MANNOSYL-TRANSFERASE 2"/>
    <property type="match status" value="1"/>
</dbReference>
<dbReference type="Pfam" id="PF02366">
    <property type="entry name" value="PMT"/>
    <property type="match status" value="1"/>
</dbReference>
<dbReference type="Pfam" id="PF16192">
    <property type="entry name" value="PMT_4TMC"/>
    <property type="match status" value="1"/>
</dbReference>
<reference key="1">
    <citation type="journal article" date="1998" name="Nature">
        <title>Deciphering the biology of Mycobacterium tuberculosis from the complete genome sequence.</title>
        <authorList>
            <person name="Cole S.T."/>
            <person name="Brosch R."/>
            <person name="Parkhill J."/>
            <person name="Garnier T."/>
            <person name="Churcher C.M."/>
            <person name="Harris D.E."/>
            <person name="Gordon S.V."/>
            <person name="Eiglmeier K."/>
            <person name="Gas S."/>
            <person name="Barry C.E. III"/>
            <person name="Tekaia F."/>
            <person name="Badcock K."/>
            <person name="Basham D."/>
            <person name="Brown D."/>
            <person name="Chillingworth T."/>
            <person name="Connor R."/>
            <person name="Davies R.M."/>
            <person name="Devlin K."/>
            <person name="Feltwell T."/>
            <person name="Gentles S."/>
            <person name="Hamlin N."/>
            <person name="Holroyd S."/>
            <person name="Hornsby T."/>
            <person name="Jagels K."/>
            <person name="Krogh A."/>
            <person name="McLean J."/>
            <person name="Moule S."/>
            <person name="Murphy L.D."/>
            <person name="Oliver S."/>
            <person name="Osborne J."/>
            <person name="Quail M.A."/>
            <person name="Rajandream M.A."/>
            <person name="Rogers J."/>
            <person name="Rutter S."/>
            <person name="Seeger K."/>
            <person name="Skelton S."/>
            <person name="Squares S."/>
            <person name="Squares R."/>
            <person name="Sulston J.E."/>
            <person name="Taylor K."/>
            <person name="Whitehead S."/>
            <person name="Barrell B.G."/>
        </authorList>
    </citation>
    <scope>NUCLEOTIDE SEQUENCE [LARGE SCALE GENOMIC DNA]</scope>
    <source>
        <strain>ATCC 25618 / H37Rv</strain>
    </source>
</reference>
<reference key="2">
    <citation type="journal article" date="2005" name="Science">
        <title>Export-mediated assembly of mycobacterial glycoproteins parallels eukaryotic pathways.</title>
        <authorList>
            <person name="VanderVen B.C."/>
            <person name="Harder J.D."/>
            <person name="Crick D.C."/>
            <person name="Belisle J.T."/>
        </authorList>
    </citation>
    <scope>FUNCTION</scope>
    <scope>SUBCELLULAR LOCATION</scope>
    <scope>PATHWAY</scope>
    <scope>MUTAGENESIS OF ASP-74 AND GLU-75</scope>
    <source>
        <strain>ATCC 25618 / H37Rv</strain>
    </source>
</reference>
<reference key="3">
    <citation type="journal article" date="2011" name="Mol. Cell. Proteomics">
        <title>Proteogenomic analysis of Mycobacterium tuberculosis by high resolution mass spectrometry.</title>
        <authorList>
            <person name="Kelkar D.S."/>
            <person name="Kumar D."/>
            <person name="Kumar P."/>
            <person name="Balakrishnan L."/>
            <person name="Muthusamy B."/>
            <person name="Yadav A.K."/>
            <person name="Shrivastava P."/>
            <person name="Marimuthu A."/>
            <person name="Anand S."/>
            <person name="Sundaram H."/>
            <person name="Kingsbury R."/>
            <person name="Harsha H.C."/>
            <person name="Nair B."/>
            <person name="Prasad T.S."/>
            <person name="Chauhan D.S."/>
            <person name="Katoch K."/>
            <person name="Katoch V.M."/>
            <person name="Kumar P."/>
            <person name="Chaerkady R."/>
            <person name="Ramachandran S."/>
            <person name="Dash D."/>
            <person name="Pandey A."/>
        </authorList>
    </citation>
    <scope>IDENTIFICATION BY MASS SPECTROMETRY [LARGE SCALE ANALYSIS]</scope>
    <source>
        <strain>ATCC 25618 / H37Rv</strain>
    </source>
</reference>
<reference key="4">
    <citation type="journal article" date="2013" name="Proc. Natl. Acad. Sci. U.S.A.">
        <title>Bacterial protein-O-mannosylating enzyme is crucial for virulence of Mycobacterium tuberculosis.</title>
        <authorList>
            <person name="Liu C.F."/>
            <person name="Tonini L."/>
            <person name="Malaga W."/>
            <person name="Beau M."/>
            <person name="Stella A."/>
            <person name="Bouyssie D."/>
            <person name="Jackson M.C."/>
            <person name="Nigou J."/>
            <person name="Puzo G."/>
            <person name="Guilhot C."/>
            <person name="Burlet-Schiltz O."/>
            <person name="Riviere M."/>
        </authorList>
    </citation>
    <scope>FUNCTION</scope>
    <scope>PATHWAY</scope>
    <scope>DISRUPTION PHENOTYPE</scope>
    <source>
        <strain>H37Rv</strain>
    </source>
</reference>
<reference key="5">
    <citation type="journal article" date="2020" name="Molecules">
        <title>Potential Plasticity of the Mannoprotein Repertoire Associated to Mycobacterium tuberculosis Virulence Unveiled by Mass Spectrometry-Based Glycoproteomics.</title>
        <authorList>
            <person name="Tonini L."/>
            <person name="Sadet B."/>
            <person name="Stella A."/>
            <person name="Bouyssie D."/>
            <person name="Nigou J."/>
            <person name="Burlet-Schiltz O."/>
            <person name="Riviere M."/>
        </authorList>
    </citation>
    <scope>FUNCTION</scope>
    <scope>INDUCTION</scope>
    <scope>DISRUPTION PHENOTYPE</scope>
    <source>
        <strain>H37Rv</strain>
    </source>
</reference>
<reference key="6">
    <citation type="journal article" date="2022" name="APMIS">
        <title>Protein O-mannosyltransferase Rv1002c contributes to low cell permeability, biofilm formation in vitro, and mycobacterial survival in mice.</title>
        <authorList>
            <person name="Yang S."/>
            <person name="Sui S."/>
            <person name="Qin Y."/>
            <person name="Chen H."/>
            <person name="Sha S."/>
            <person name="Liu X."/>
            <person name="Deng G."/>
            <person name="Ma Y."/>
        </authorList>
    </citation>
    <scope>OVEREXPRESSION IN M.SMEGMATIS</scope>
    <scope>IDENTIFICATION BY MASS SPECTROMETRY</scope>
</reference>
<reference key="7">
    <citation type="journal article" date="2023" name="Glycobiology">
        <title>Development of a novel target-based cell assay, reporter of the activity of Mycobacterium tuberculosis protein-O-mannosyltransferase.</title>
        <authorList>
            <person name="Geraud N."/>
            <person name="Falcou C."/>
            <person name="Parra J."/>
            <person name="Froment C."/>
            <person name="Rengel D."/>
            <person name="Burlet-Schiltz O."/>
            <person name="Marcoux J."/>
            <person name="Nigou J."/>
            <person name="Riviere M."/>
            <person name="Fabre E."/>
        </authorList>
    </citation>
    <scope>FUNCTION</scope>
    <scope>PATHWAY</scope>
    <scope>BIOTECHNOLOGY</scope>
    <scope>MUTAGENESIS OF LEU-366; TYR-371 AND TYR-444</scope>
</reference>
<reference key="8">
    <citation type="journal article" date="2024" name="Vaccines (Basel)">
        <title>Enhanced Glycosylation Caused by Overexpression of Rv1002c in a Recombinant BCG Promotes Immune Response and Protects against Mycobacterium tuberculosis Infection.</title>
        <authorList>
            <person name="Weng S."/>
            <person name="Li Q."/>
            <person name="Zhang T."/>
            <person name="Lin T."/>
            <person name="He Y."/>
            <person name="Yang G."/>
            <person name="Wang H."/>
            <person name="Xu Y."/>
        </authorList>
    </citation>
    <scope>OVEREXPRESSION IN M.BOVIS BCG</scope>
    <scope>BIOTECHNOLOGY</scope>
    <source>
        <strain>H37Rv</strain>
    </source>
</reference>
<proteinExistence type="evidence at protein level"/>
<accession>P9WN05</accession>
<accession>L0T8C2</accession>
<accession>O05586</accession>
<keyword id="KW-1003">Cell membrane</keyword>
<keyword id="KW-0328">Glycosyltransferase</keyword>
<keyword id="KW-0472">Membrane</keyword>
<keyword id="KW-1185">Reference proteome</keyword>
<keyword id="KW-0808">Transferase</keyword>
<keyword id="KW-0812">Transmembrane</keyword>
<keyword id="KW-1133">Transmembrane helix</keyword>
<gene>
    <name type="primary">pmt</name>
    <name evidence="14" type="ordered locus">Rv1002c</name>
    <name type="ORF">MTCI237.17c</name>
</gene>
<comment type="function">
    <text evidence="2 3 4 6">Protein O-mannosyltransferase that catalyzes the transfer of a single mannose residue from a polyprenol phospho-mannosyl lipidic donor to the hydroxyl group of selected serine and threonine residues in acceptor proteins (PubMed:16081738, PubMed:37698262). Sec-translocation of the acceptor proteins is required for protein mannosylation, suggesting that O-mannosylation should affect only extracytoplasmic proteins (PubMed:16081738). Is crucial for virulence (PubMed:23550160, PubMed:32443484). It may play a role in adaptive regulation of the mannoproteome during host cell infection (PubMed:32443484).</text>
</comment>
<comment type="function">
    <text evidence="5 7">Overexpression in M.smegmatis decreases the cell envelope permeability and promotes microbial biofilm formation (PubMed:34978741). It also inhibits the release of pro-inflammatory cytokines in serum and significantly promotes M.smegmatis survival in the lungs, spleens, livers and kidneys of infected mice (PubMed:34978741). Overexpression in M.bovis strain BCG, the only effective tuberculosis vaccine in common use, leads to a strain that secretes more glycosylated proteins, significantly enhancing macrophage activation and immune protection against M.tuberculosis (PubMed:38932351).</text>
</comment>
<comment type="pathway">
    <text evidence="2 3 6">Protein modification; protein glycosylation.</text>
</comment>
<comment type="subcellular location">
    <subcellularLocation>
        <location evidence="2">Cell membrane</location>
        <topology evidence="1">Multi-pass membrane protein</topology>
    </subcellularLocation>
</comment>
<comment type="induction">
    <text evidence="4">Expression is increased in infected macrophages.</text>
</comment>
<comment type="disruption phenotype">
    <text evidence="3 4">Deletion of the gene leads to the loss of protein O-mannosylation (PubMed:23550160, PubMed:32443484). The mutant has severely impacted growth in vitro and in macrophages, associated with a strong attenuation of its pathogenicity in immunocompromised mice (PubMed:23550160).</text>
</comment>
<comment type="biotechnology">
    <text evidence="6 7">The BCG strain overexpressing this gene (rBCG-Rv1002c) has the potential to be an excellent candidate for a preventive vaccine against tuberculosis (PubMed:38932351). Two compounds containing pyrrole analogous rings were identified as significant inhibitors of MtPMT activity, affecting neither the growth of the mycobacterium nor its secretion of mannoproteins (PubMed:37698262). These molecular cores could therefore serve as scaffold for the design of new pharmaceutical agents that could improve treatment of mycobacterial diseases (PubMed:37698262).</text>
</comment>
<comment type="similarity">
    <text evidence="11">Belongs to the glycosyltransferase 39 family.</text>
</comment>
<comment type="sequence caution">
    <conflict type="erroneous initiation">
        <sequence resource="EMBL-CDS" id="CCP43752"/>
    </conflict>
    <text>Truncated N-terminus.</text>
</comment>
<evidence type="ECO:0000255" key="1"/>
<evidence type="ECO:0000269" key="2">
    <source>
    </source>
</evidence>
<evidence type="ECO:0000269" key="3">
    <source>
    </source>
</evidence>
<evidence type="ECO:0000269" key="4">
    <source>
    </source>
</evidence>
<evidence type="ECO:0000269" key="5">
    <source>
    </source>
</evidence>
<evidence type="ECO:0000269" key="6">
    <source>
    </source>
</evidence>
<evidence type="ECO:0000269" key="7">
    <source>
    </source>
</evidence>
<evidence type="ECO:0000303" key="8">
    <source>
    </source>
</evidence>
<evidence type="ECO:0000303" key="9">
    <source>
    </source>
</evidence>
<evidence type="ECO:0000303" key="10">
    <source>
    </source>
</evidence>
<evidence type="ECO:0000305" key="11"/>
<evidence type="ECO:0000305" key="12">
    <source>
    </source>
</evidence>
<evidence type="ECO:0000305" key="13">
    <source>
    </source>
</evidence>
<evidence type="ECO:0000312" key="14">
    <source>
        <dbReference type="EMBL" id="CCP43752.1"/>
    </source>
</evidence>
<organism>
    <name type="scientific">Mycobacterium tuberculosis (strain ATCC 25618 / H37Rv)</name>
    <dbReference type="NCBI Taxonomy" id="83332"/>
    <lineage>
        <taxon>Bacteria</taxon>
        <taxon>Bacillati</taxon>
        <taxon>Actinomycetota</taxon>
        <taxon>Actinomycetes</taxon>
        <taxon>Mycobacteriales</taxon>
        <taxon>Mycobacteriaceae</taxon>
        <taxon>Mycobacterium</taxon>
        <taxon>Mycobacterium tuberculosis complex</taxon>
    </lineage>
</organism>
<sequence>MTARPPESCVLAKDRPEEPVVPVVSPGPLVPVADFGPLDRLRGWIVTGLITLLATVTRFLNLGSLTDAGTPIFDEKHYAPQAWQVLNNHGVEDNPGYGLVVHPPVGKQLIAIGEAIFGYNGFGWRFTGALLGVVLVALVVRIVRRISRSTLVGAIAGVLLICDGVSFVTARTALLDGFLTFFVVAAFGALIVDRDQVRERMHIALLAGRSAATVWGPRVGVRWWRFGAGVLLGLACATKWSGVYFVLFFGAMALAFDVAARRQYQVQRPWLGTVRRDVLPSGYALGLIPFAVYLATYAPWFASETAIDRHAVGQAVGRNSVVPLPDAVRSLWHYTAKAFHFHAGLTNSAGNYHPWESKPWTWPMSLRPVLYAIDQQDVAGCGAQSCVKAEMLVGTPAMWWLAVPVLAYAGWRMFVRRDWRYAVVLVGYCAGWLPWFADIDRQMYFFYAATMAPFLVMGISLVLGDILYHPGQGSERRTLGLIVVCCYVALVVTNFAWLYPVLTGLPISQQTWNLEIWLPSWR</sequence>
<feature type="chain" id="PRO_0000121517" description="Polyprenol-phosphate-mannose--protein mannosyltransferase">
    <location>
        <begin position="1"/>
        <end position="522"/>
    </location>
</feature>
<feature type="topological domain" description="Cytoplasmic" evidence="11">
    <location>
        <begin position="1"/>
        <end position="42"/>
    </location>
</feature>
<feature type="transmembrane region" description="Helical" evidence="1">
    <location>
        <begin position="43"/>
        <end position="63"/>
    </location>
</feature>
<feature type="topological domain" description="Extracellular" evidence="12">
    <location>
        <begin position="64"/>
        <end position="119"/>
    </location>
</feature>
<feature type="transmembrane region" description="Helical" evidence="1">
    <location>
        <begin position="120"/>
        <end position="140"/>
    </location>
</feature>
<feature type="topological domain" description="Cytoplasmic" evidence="11">
    <location>
        <begin position="141"/>
        <end position="149"/>
    </location>
</feature>
<feature type="transmembrane region" description="Helical" evidence="1">
    <location>
        <begin position="150"/>
        <end position="170"/>
    </location>
</feature>
<feature type="topological domain" description="Extracellular" evidence="11">
    <location>
        <position position="171"/>
    </location>
</feature>
<feature type="transmembrane region" description="Helical" evidence="1">
    <location>
        <begin position="172"/>
        <end position="192"/>
    </location>
</feature>
<feature type="topological domain" description="Cytoplasmic" evidence="11">
    <location>
        <begin position="193"/>
        <end position="239"/>
    </location>
</feature>
<feature type="transmembrane region" description="Helical" evidence="1">
    <location>
        <begin position="240"/>
        <end position="260"/>
    </location>
</feature>
<feature type="topological domain" description="Extracellular" evidence="11">
    <location>
        <begin position="261"/>
        <end position="281"/>
    </location>
</feature>
<feature type="transmembrane region" description="Helical" evidence="1">
    <location>
        <begin position="282"/>
        <end position="302"/>
    </location>
</feature>
<feature type="topological domain" description="Cytoplasmic" evidence="11">
    <location>
        <begin position="303"/>
        <end position="390"/>
    </location>
</feature>
<feature type="transmembrane region" description="Helical" evidence="1">
    <location>
        <begin position="391"/>
        <end position="411"/>
    </location>
</feature>
<feature type="topological domain" description="Extracellular" evidence="11">
    <location>
        <begin position="412"/>
        <end position="418"/>
    </location>
</feature>
<feature type="transmembrane region" description="Helical" evidence="1">
    <location>
        <begin position="419"/>
        <end position="439"/>
    </location>
</feature>
<feature type="topological domain" description="Cytoplasmic" evidence="11">
    <location>
        <begin position="440"/>
        <end position="442"/>
    </location>
</feature>
<feature type="transmembrane region" description="Helical" evidence="1">
    <location>
        <begin position="443"/>
        <end position="463"/>
    </location>
</feature>
<feature type="topological domain" description="Extracellular" evidence="11">
    <location>
        <begin position="464"/>
        <end position="478"/>
    </location>
</feature>
<feature type="transmembrane region" description="Helical" evidence="1">
    <location>
        <begin position="479"/>
        <end position="499"/>
    </location>
</feature>
<feature type="topological domain" description="Cytoplasmic" evidence="11">
    <location>
        <begin position="500"/>
        <end position="522"/>
    </location>
</feature>
<feature type="mutagenesis site" description="Loss of protein mannosyltransferase activity." evidence="2">
    <original>DE</original>
    <variation>AA</variation>
    <location>
        <begin position="74"/>
        <end position="75"/>
    </location>
</feature>
<feature type="mutagenesis site" description="Loss of protein mannosyltransferase activity." evidence="2">
    <original>D</original>
    <variation>A</variation>
    <location>
        <position position="74"/>
    </location>
</feature>
<feature type="mutagenesis site" description="Loss of protein mannosyltransferase activity." evidence="2">
    <original>E</original>
    <variation>A</variation>
    <location>
        <position position="75"/>
    </location>
</feature>
<feature type="mutagenesis site" description="Decreases FasC(His) mannosylation when expressed in M.smegmatis." evidence="6">
    <original>L</original>
    <variation>A</variation>
    <location>
        <position position="366"/>
    </location>
</feature>
<feature type="mutagenesis site" description="Decreases FasC(His) mannosylation when expressed in M.smegmatis." evidence="6">
    <original>Y</original>
    <variation>A</variation>
    <location>
        <position position="371"/>
    </location>
</feature>
<feature type="mutagenesis site" description="Almost loss of FasC(His) mannosylation when expressed in M.smegmatis." evidence="6">
    <original>Y</original>
    <variation>A</variation>
    <location>
        <position position="444"/>
    </location>
</feature>
<name>PMT_MYCTU</name>